<evidence type="ECO:0000250" key="1">
    <source>
        <dbReference type="UniProtKB" id="Q99K23"/>
    </source>
</evidence>
<evidence type="ECO:0000250" key="2">
    <source>
        <dbReference type="UniProtKB" id="Q9NUQ7"/>
    </source>
</evidence>
<evidence type="ECO:0000305" key="3"/>
<evidence type="ECO:0000312" key="4">
    <source>
        <dbReference type="EMBL" id="AAN71164.1"/>
    </source>
</evidence>
<evidence type="ECO:0000312" key="5">
    <source>
        <dbReference type="FlyBase" id="FBgn0036512"/>
    </source>
</evidence>
<evidence type="ECO:0000312" key="6">
    <source>
        <dbReference type="Proteomes" id="UP000000803"/>
    </source>
</evidence>
<gene>
    <name evidence="5" type="primary">Ufsp2</name>
    <name evidence="5" type="ORF">CG16979</name>
</gene>
<proteinExistence type="evidence at transcript level"/>
<name>UFSP2_DROME</name>
<sequence>MLPKLKISAFLLKRLERTKQQCSGCLFGVFYGEGTLLLLSFNIESSLGQLNYEQIQHRFPAELDLCGLVKFGGCTDGEAHLNEVIKSVDITDNPILLQCELGTLVGLRASFFVHGKLEEVPYEVMEAHQLYNDFCFTRLQCGFFLQTAATPESVAREMHVLRKRVADGNLVFNVPQTKIFINNYGPLDKQFSGDSQIQDLIDVIPTPGHEKETASVDKKKLKGQNTPVKRLAPTGCDYEVIPIDVMRSRSRDPVSGEPPHPALSIAVTNEEQIRVQVPLEIEAMAILCRKTKLQRLYDVLIESICRGLRLFELSLIEHLTESGSGKLLVPASYHFYPQEFGHFVSCAYLEGLSDDTPSMLMRRKRLHRQFALPISRPYFRRANQMLFLGETEDAPWTPLLNTHIGLRPSGVVDGKEYLVNGNYHYYHYLQQQVQDKGWGCAYRSLQTICSWFVLQGYTNAPIPTHLEVQEYLHKINDKPAAFVGSSQWIGSTEISMCLQGFLNVDSKILHVASGAELATIASELAMHFQTQGTPVMIGGGVLAHTIIGVDYCVQTGQVKFLILDPHYTGADDLATIQIKGWCGWKGMDFWAKGSYYNLCMPQRPILY</sequence>
<protein>
    <recommendedName>
        <fullName evidence="2">Probable Ufm1-specific protease 2</fullName>
        <shortName evidence="2">UfSP2</shortName>
        <ecNumber evidence="1 2">3.4.22.-</ecNumber>
    </recommendedName>
</protein>
<comment type="function">
    <text evidence="1 2">Thiol protease which recognizes and hydrolyzes the peptide bond at the C-terminal Gly of UFM1, a ubiquitin-like modifier protein bound to a number of target proteins. Does not hydrolyze SUMO1 or ISG15 ubiquitin-like proteins.</text>
</comment>
<comment type="similarity">
    <text evidence="3">Belongs to the peptidase C78 family.</text>
</comment>
<dbReference type="EC" id="3.4.22.-" evidence="1 2"/>
<dbReference type="EMBL" id="AE014296">
    <property type="protein sequence ID" value="AAF49615.1"/>
    <property type="molecule type" value="Genomic_DNA"/>
</dbReference>
<dbReference type="EMBL" id="BT001409">
    <property type="protein sequence ID" value="AAN71164.1"/>
    <property type="molecule type" value="mRNA"/>
</dbReference>
<dbReference type="RefSeq" id="NP_648779.1">
    <property type="nucleotide sequence ID" value="NM_140522.3"/>
</dbReference>
<dbReference type="SMR" id="Q9VUR0"/>
<dbReference type="BioGRID" id="65006">
    <property type="interactions" value="2"/>
</dbReference>
<dbReference type="FunCoup" id="Q9VUR0">
    <property type="interactions" value="545"/>
</dbReference>
<dbReference type="IntAct" id="Q9VUR0">
    <property type="interactions" value="1"/>
</dbReference>
<dbReference type="STRING" id="7227.FBpp0075316"/>
<dbReference type="MEROPS" id="C78.A01"/>
<dbReference type="GlyGen" id="Q9VUR0">
    <property type="glycosylation" value="1 site"/>
</dbReference>
<dbReference type="PaxDb" id="7227-FBpp0075316"/>
<dbReference type="DNASU" id="39687"/>
<dbReference type="EnsemblMetazoa" id="FBtr0075563">
    <property type="protein sequence ID" value="FBpp0075316"/>
    <property type="gene ID" value="FBgn0036512"/>
</dbReference>
<dbReference type="GeneID" id="39687"/>
<dbReference type="KEGG" id="dme:Dmel_CG16979"/>
<dbReference type="UCSC" id="CG16979-RA">
    <property type="organism name" value="d. melanogaster"/>
</dbReference>
<dbReference type="AGR" id="FB:FBgn0036512"/>
<dbReference type="CTD" id="55325"/>
<dbReference type="FlyBase" id="FBgn0036512">
    <property type="gene designation" value="Ufsp2"/>
</dbReference>
<dbReference type="VEuPathDB" id="VectorBase:FBgn0036512"/>
<dbReference type="eggNOG" id="KOG2433">
    <property type="taxonomic scope" value="Eukaryota"/>
</dbReference>
<dbReference type="GeneTree" id="ENSGT00940000157115"/>
<dbReference type="HOGENOM" id="CLU_021066_1_0_1"/>
<dbReference type="InParanoid" id="Q9VUR0"/>
<dbReference type="OMA" id="CGLVKFG"/>
<dbReference type="OrthoDB" id="417506at2759"/>
<dbReference type="PhylomeDB" id="Q9VUR0"/>
<dbReference type="BioGRID-ORCS" id="39687">
    <property type="hits" value="0 hits in 1 CRISPR screen"/>
</dbReference>
<dbReference type="GenomeRNAi" id="39687"/>
<dbReference type="PRO" id="PR:Q9VUR0"/>
<dbReference type="Proteomes" id="UP000000803">
    <property type="component" value="Chromosome 3L"/>
</dbReference>
<dbReference type="Bgee" id="FBgn0036512">
    <property type="expression patterns" value="Expressed in testis and 77 other cell types or tissues"/>
</dbReference>
<dbReference type="GO" id="GO:0012505">
    <property type="term" value="C:endomembrane system"/>
    <property type="evidence" value="ECO:0007005"/>
    <property type="project" value="FlyBase"/>
</dbReference>
<dbReference type="GO" id="GO:0005783">
    <property type="term" value="C:endoplasmic reticulum"/>
    <property type="evidence" value="ECO:0000318"/>
    <property type="project" value="GO_Central"/>
</dbReference>
<dbReference type="GO" id="GO:0005634">
    <property type="term" value="C:nucleus"/>
    <property type="evidence" value="ECO:0000318"/>
    <property type="project" value="GO_Central"/>
</dbReference>
<dbReference type="GO" id="GO:0071567">
    <property type="term" value="F:deUFMylase activity"/>
    <property type="evidence" value="ECO:0000250"/>
    <property type="project" value="UniProtKB"/>
</dbReference>
<dbReference type="GO" id="GO:0006508">
    <property type="term" value="P:proteolysis"/>
    <property type="evidence" value="ECO:0000250"/>
    <property type="project" value="UniProtKB"/>
</dbReference>
<dbReference type="FunFam" id="3.90.70.130:FF:000001">
    <property type="entry name" value="Probable Ufm1-specific protease 2"/>
    <property type="match status" value="1"/>
</dbReference>
<dbReference type="Gene3D" id="3.90.70.130">
    <property type="match status" value="1"/>
</dbReference>
<dbReference type="InterPro" id="IPR038765">
    <property type="entry name" value="Papain-like_cys_pep_sf"/>
</dbReference>
<dbReference type="InterPro" id="IPR012462">
    <property type="entry name" value="UfSP1/2_DUB_cat"/>
</dbReference>
<dbReference type="InterPro" id="IPR049387">
    <property type="entry name" value="UfSP2-like_N"/>
</dbReference>
<dbReference type="PANTHER" id="PTHR48153">
    <property type="entry name" value="UFM1-SPECIFIC PROTEASE 2"/>
    <property type="match status" value="1"/>
</dbReference>
<dbReference type="PANTHER" id="PTHR48153:SF2">
    <property type="entry name" value="UFM1-SPECIFIC PROTEASE 2"/>
    <property type="match status" value="1"/>
</dbReference>
<dbReference type="Pfam" id="PF07910">
    <property type="entry name" value="Peptidase_C78"/>
    <property type="match status" value="1"/>
</dbReference>
<dbReference type="Pfam" id="PF20908">
    <property type="entry name" value="UfSP2_N"/>
    <property type="match status" value="1"/>
</dbReference>
<dbReference type="SUPFAM" id="SSF54001">
    <property type="entry name" value="Cysteine proteinases"/>
    <property type="match status" value="1"/>
</dbReference>
<organism evidence="6">
    <name type="scientific">Drosophila melanogaster</name>
    <name type="common">Fruit fly</name>
    <dbReference type="NCBI Taxonomy" id="7227"/>
    <lineage>
        <taxon>Eukaryota</taxon>
        <taxon>Metazoa</taxon>
        <taxon>Ecdysozoa</taxon>
        <taxon>Arthropoda</taxon>
        <taxon>Hexapoda</taxon>
        <taxon>Insecta</taxon>
        <taxon>Pterygota</taxon>
        <taxon>Neoptera</taxon>
        <taxon>Endopterygota</taxon>
        <taxon>Diptera</taxon>
        <taxon>Brachycera</taxon>
        <taxon>Muscomorpha</taxon>
        <taxon>Ephydroidea</taxon>
        <taxon>Drosophilidae</taxon>
        <taxon>Drosophila</taxon>
        <taxon>Sophophora</taxon>
    </lineage>
</organism>
<reference evidence="6" key="1">
    <citation type="journal article" date="2000" name="Science">
        <title>The genome sequence of Drosophila melanogaster.</title>
        <authorList>
            <person name="Adams M.D."/>
            <person name="Celniker S.E."/>
            <person name="Holt R.A."/>
            <person name="Evans C.A."/>
            <person name="Gocayne J.D."/>
            <person name="Amanatides P.G."/>
            <person name="Scherer S.E."/>
            <person name="Li P.W."/>
            <person name="Hoskins R.A."/>
            <person name="Galle R.F."/>
            <person name="George R.A."/>
            <person name="Lewis S.E."/>
            <person name="Richards S."/>
            <person name="Ashburner M."/>
            <person name="Henderson S.N."/>
            <person name="Sutton G.G."/>
            <person name="Wortman J.R."/>
            <person name="Yandell M.D."/>
            <person name="Zhang Q."/>
            <person name="Chen L.X."/>
            <person name="Brandon R.C."/>
            <person name="Rogers Y.-H.C."/>
            <person name="Blazej R.G."/>
            <person name="Champe M."/>
            <person name="Pfeiffer B.D."/>
            <person name="Wan K.H."/>
            <person name="Doyle C."/>
            <person name="Baxter E.G."/>
            <person name="Helt G."/>
            <person name="Nelson C.R."/>
            <person name="Miklos G.L.G."/>
            <person name="Abril J.F."/>
            <person name="Agbayani A."/>
            <person name="An H.-J."/>
            <person name="Andrews-Pfannkoch C."/>
            <person name="Baldwin D."/>
            <person name="Ballew R.M."/>
            <person name="Basu A."/>
            <person name="Baxendale J."/>
            <person name="Bayraktaroglu L."/>
            <person name="Beasley E.M."/>
            <person name="Beeson K.Y."/>
            <person name="Benos P.V."/>
            <person name="Berman B.P."/>
            <person name="Bhandari D."/>
            <person name="Bolshakov S."/>
            <person name="Borkova D."/>
            <person name="Botchan M.R."/>
            <person name="Bouck J."/>
            <person name="Brokstein P."/>
            <person name="Brottier P."/>
            <person name="Burtis K.C."/>
            <person name="Busam D.A."/>
            <person name="Butler H."/>
            <person name="Cadieu E."/>
            <person name="Center A."/>
            <person name="Chandra I."/>
            <person name="Cherry J.M."/>
            <person name="Cawley S."/>
            <person name="Dahlke C."/>
            <person name="Davenport L.B."/>
            <person name="Davies P."/>
            <person name="de Pablos B."/>
            <person name="Delcher A."/>
            <person name="Deng Z."/>
            <person name="Mays A.D."/>
            <person name="Dew I."/>
            <person name="Dietz S.M."/>
            <person name="Dodson K."/>
            <person name="Doup L.E."/>
            <person name="Downes M."/>
            <person name="Dugan-Rocha S."/>
            <person name="Dunkov B.C."/>
            <person name="Dunn P."/>
            <person name="Durbin K.J."/>
            <person name="Evangelista C.C."/>
            <person name="Ferraz C."/>
            <person name="Ferriera S."/>
            <person name="Fleischmann W."/>
            <person name="Fosler C."/>
            <person name="Gabrielian A.E."/>
            <person name="Garg N.S."/>
            <person name="Gelbart W.M."/>
            <person name="Glasser K."/>
            <person name="Glodek A."/>
            <person name="Gong F."/>
            <person name="Gorrell J.H."/>
            <person name="Gu Z."/>
            <person name="Guan P."/>
            <person name="Harris M."/>
            <person name="Harris N.L."/>
            <person name="Harvey D.A."/>
            <person name="Heiman T.J."/>
            <person name="Hernandez J.R."/>
            <person name="Houck J."/>
            <person name="Hostin D."/>
            <person name="Houston K.A."/>
            <person name="Howland T.J."/>
            <person name="Wei M.-H."/>
            <person name="Ibegwam C."/>
            <person name="Jalali M."/>
            <person name="Kalush F."/>
            <person name="Karpen G.H."/>
            <person name="Ke Z."/>
            <person name="Kennison J.A."/>
            <person name="Ketchum K.A."/>
            <person name="Kimmel B.E."/>
            <person name="Kodira C.D."/>
            <person name="Kraft C.L."/>
            <person name="Kravitz S."/>
            <person name="Kulp D."/>
            <person name="Lai Z."/>
            <person name="Lasko P."/>
            <person name="Lei Y."/>
            <person name="Levitsky A.A."/>
            <person name="Li J.H."/>
            <person name="Li Z."/>
            <person name="Liang Y."/>
            <person name="Lin X."/>
            <person name="Liu X."/>
            <person name="Mattei B."/>
            <person name="McIntosh T.C."/>
            <person name="McLeod M.P."/>
            <person name="McPherson D."/>
            <person name="Merkulov G."/>
            <person name="Milshina N.V."/>
            <person name="Mobarry C."/>
            <person name="Morris J."/>
            <person name="Moshrefi A."/>
            <person name="Mount S.M."/>
            <person name="Moy M."/>
            <person name="Murphy B."/>
            <person name="Murphy L."/>
            <person name="Muzny D.M."/>
            <person name="Nelson D.L."/>
            <person name="Nelson D.R."/>
            <person name="Nelson K.A."/>
            <person name="Nixon K."/>
            <person name="Nusskern D.R."/>
            <person name="Pacleb J.M."/>
            <person name="Palazzolo M."/>
            <person name="Pittman G.S."/>
            <person name="Pan S."/>
            <person name="Pollard J."/>
            <person name="Puri V."/>
            <person name="Reese M.G."/>
            <person name="Reinert K."/>
            <person name="Remington K."/>
            <person name="Saunders R.D.C."/>
            <person name="Scheeler F."/>
            <person name="Shen H."/>
            <person name="Shue B.C."/>
            <person name="Siden-Kiamos I."/>
            <person name="Simpson M."/>
            <person name="Skupski M.P."/>
            <person name="Smith T.J."/>
            <person name="Spier E."/>
            <person name="Spradling A.C."/>
            <person name="Stapleton M."/>
            <person name="Strong R."/>
            <person name="Sun E."/>
            <person name="Svirskas R."/>
            <person name="Tector C."/>
            <person name="Turner R."/>
            <person name="Venter E."/>
            <person name="Wang A.H."/>
            <person name="Wang X."/>
            <person name="Wang Z.-Y."/>
            <person name="Wassarman D.A."/>
            <person name="Weinstock G.M."/>
            <person name="Weissenbach J."/>
            <person name="Williams S.M."/>
            <person name="Woodage T."/>
            <person name="Worley K.C."/>
            <person name="Wu D."/>
            <person name="Yang S."/>
            <person name="Yao Q.A."/>
            <person name="Ye J."/>
            <person name="Yeh R.-F."/>
            <person name="Zaveri J.S."/>
            <person name="Zhan M."/>
            <person name="Zhang G."/>
            <person name="Zhao Q."/>
            <person name="Zheng L."/>
            <person name="Zheng X.H."/>
            <person name="Zhong F.N."/>
            <person name="Zhong W."/>
            <person name="Zhou X."/>
            <person name="Zhu S.C."/>
            <person name="Zhu X."/>
            <person name="Smith H.O."/>
            <person name="Gibbs R.A."/>
            <person name="Myers E.W."/>
            <person name="Rubin G.M."/>
            <person name="Venter J.C."/>
        </authorList>
    </citation>
    <scope>NUCLEOTIDE SEQUENCE [LARGE SCALE GENOMIC DNA]</scope>
    <source>
        <strain evidence="6">Berkeley</strain>
    </source>
</reference>
<reference evidence="6" key="2">
    <citation type="journal article" date="2002" name="Genome Biol.">
        <title>Annotation of the Drosophila melanogaster euchromatic genome: a systematic review.</title>
        <authorList>
            <person name="Misra S."/>
            <person name="Crosby M.A."/>
            <person name="Mungall C.J."/>
            <person name="Matthews B.B."/>
            <person name="Campbell K.S."/>
            <person name="Hradecky P."/>
            <person name="Huang Y."/>
            <person name="Kaminker J.S."/>
            <person name="Millburn G.H."/>
            <person name="Prochnik S.E."/>
            <person name="Smith C.D."/>
            <person name="Tupy J.L."/>
            <person name="Whitfield E.J."/>
            <person name="Bayraktaroglu L."/>
            <person name="Berman B.P."/>
            <person name="Bettencourt B.R."/>
            <person name="Celniker S.E."/>
            <person name="de Grey A.D.N.J."/>
            <person name="Drysdale R.A."/>
            <person name="Harris N.L."/>
            <person name="Richter J."/>
            <person name="Russo S."/>
            <person name="Schroeder A.J."/>
            <person name="Shu S.Q."/>
            <person name="Stapleton M."/>
            <person name="Yamada C."/>
            <person name="Ashburner M."/>
            <person name="Gelbart W.M."/>
            <person name="Rubin G.M."/>
            <person name="Lewis S.E."/>
        </authorList>
    </citation>
    <scope>GENOME REANNOTATION</scope>
    <source>
        <strain evidence="6">Berkeley</strain>
    </source>
</reference>
<reference evidence="4" key="3">
    <citation type="journal article" date="2002" name="Genome Biol.">
        <title>A Drosophila full-length cDNA resource.</title>
        <authorList>
            <person name="Stapleton M."/>
            <person name="Carlson J.W."/>
            <person name="Brokstein P."/>
            <person name="Yu C."/>
            <person name="Champe M."/>
            <person name="George R.A."/>
            <person name="Guarin H."/>
            <person name="Kronmiller B."/>
            <person name="Pacleb J.M."/>
            <person name="Park S."/>
            <person name="Wan K.H."/>
            <person name="Rubin G.M."/>
            <person name="Celniker S.E."/>
        </authorList>
    </citation>
    <scope>NUCLEOTIDE SEQUENCE [LARGE SCALE MRNA]</scope>
    <source>
        <strain evidence="4">Berkeley</strain>
        <tissue evidence="4">Head</tissue>
    </source>
</reference>
<feature type="chain" id="PRO_0000280372" description="Probable Ufm1-specific protease 2">
    <location>
        <begin position="1"/>
        <end position="607"/>
    </location>
</feature>
<feature type="active site" evidence="1">
    <location>
        <position position="440"/>
    </location>
</feature>
<feature type="active site" evidence="1">
    <location>
        <position position="564"/>
    </location>
</feature>
<feature type="active site" evidence="1">
    <location>
        <position position="566"/>
    </location>
</feature>
<accession>Q9VUR0</accession>
<keyword id="KW-0378">Hydrolase</keyword>
<keyword id="KW-0645">Protease</keyword>
<keyword id="KW-1185">Reference proteome</keyword>
<keyword id="KW-0788">Thiol protease</keyword>
<keyword id="KW-0833">Ubl conjugation pathway</keyword>